<reference key="1">
    <citation type="submission" date="2004-11" db="EMBL/GenBank/DDBJ databases">
        <title>Complete genome sequence of Thermus thermophilus HB8.</title>
        <authorList>
            <person name="Masui R."/>
            <person name="Kurokawa K."/>
            <person name="Nakagawa N."/>
            <person name="Tokunaga F."/>
            <person name="Koyama Y."/>
            <person name="Shibata T."/>
            <person name="Oshima T."/>
            <person name="Yokoyama S."/>
            <person name="Yasunaga T."/>
            <person name="Kuramitsu S."/>
        </authorList>
    </citation>
    <scope>NUCLEOTIDE SEQUENCE [LARGE SCALE GENOMIC DNA]</scope>
    <source>
        <strain>ATCC 27634 / DSM 579 / HB8</strain>
    </source>
</reference>
<evidence type="ECO:0000255" key="1">
    <source>
        <dbReference type="HAMAP-Rule" id="MF_00444"/>
    </source>
</evidence>
<evidence type="ECO:0007829" key="2">
    <source>
        <dbReference type="PDB" id="6HWN"/>
    </source>
</evidence>
<name>CLPP_THET8</name>
<sequence>MVIPYVIEQTARGERVYDIYSRLLKDRIIFLGTPIDAQVANVVVAQLLFLDAQNPNQEIKLYINSPGGEVDAGLAIYDTMQFVRAPVSTIVIGMAASMAAVILAAGEKGRRYALPHAKVMIHQPWGGVRGTASDIAIQAQEILKAKKLLNEILAKHTGQPLEKVEKDTDRDYYLSAQEALEYGLIDQVVTREEA</sequence>
<protein>
    <recommendedName>
        <fullName evidence="1">ATP-dependent Clp protease proteolytic subunit</fullName>
        <ecNumber evidence="1">3.4.21.92</ecNumber>
    </recommendedName>
    <alternativeName>
        <fullName evidence="1">Endopeptidase Clp</fullName>
    </alternativeName>
</protein>
<dbReference type="EC" id="3.4.21.92" evidence="1"/>
<dbReference type="EMBL" id="AP008226">
    <property type="protein sequence ID" value="BAD70438.1"/>
    <property type="molecule type" value="Genomic_DNA"/>
</dbReference>
<dbReference type="RefSeq" id="WP_008631995.1">
    <property type="nucleotide sequence ID" value="NC_006461.1"/>
</dbReference>
<dbReference type="RefSeq" id="YP_143881.1">
    <property type="nucleotide sequence ID" value="NC_006461.1"/>
</dbReference>
<dbReference type="PDB" id="6HWM">
    <property type="method" value="X-ray"/>
    <property type="resolution" value="2.70 A"/>
    <property type="chains" value="A/B/C/D/E/F/G=1-194"/>
</dbReference>
<dbReference type="PDB" id="6HWN">
    <property type="method" value="X-ray"/>
    <property type="resolution" value="1.95 A"/>
    <property type="chains" value="A/B/C/D/E/F/G=1-194"/>
</dbReference>
<dbReference type="PDBsum" id="6HWM"/>
<dbReference type="PDBsum" id="6HWN"/>
<dbReference type="SMR" id="Q5SKM8"/>
<dbReference type="MEROPS" id="S14.001"/>
<dbReference type="EnsemblBacteria" id="BAD70438">
    <property type="protein sequence ID" value="BAD70438"/>
    <property type="gene ID" value="BAD70438"/>
</dbReference>
<dbReference type="GeneID" id="3169324"/>
<dbReference type="KEGG" id="ttj:TTHA0615"/>
<dbReference type="PATRIC" id="fig|300852.9.peg.613"/>
<dbReference type="eggNOG" id="COG0740">
    <property type="taxonomic scope" value="Bacteria"/>
</dbReference>
<dbReference type="HOGENOM" id="CLU_058707_3_2_0"/>
<dbReference type="PhylomeDB" id="Q5SKM8"/>
<dbReference type="Proteomes" id="UP000000532">
    <property type="component" value="Chromosome"/>
</dbReference>
<dbReference type="GO" id="GO:0005737">
    <property type="term" value="C:cytoplasm"/>
    <property type="evidence" value="ECO:0007669"/>
    <property type="project" value="UniProtKB-SubCell"/>
</dbReference>
<dbReference type="GO" id="GO:0009368">
    <property type="term" value="C:endopeptidase Clp complex"/>
    <property type="evidence" value="ECO:0007669"/>
    <property type="project" value="TreeGrafter"/>
</dbReference>
<dbReference type="GO" id="GO:0004176">
    <property type="term" value="F:ATP-dependent peptidase activity"/>
    <property type="evidence" value="ECO:0007669"/>
    <property type="project" value="InterPro"/>
</dbReference>
<dbReference type="GO" id="GO:0051117">
    <property type="term" value="F:ATPase binding"/>
    <property type="evidence" value="ECO:0007669"/>
    <property type="project" value="TreeGrafter"/>
</dbReference>
<dbReference type="GO" id="GO:0004252">
    <property type="term" value="F:serine-type endopeptidase activity"/>
    <property type="evidence" value="ECO:0007669"/>
    <property type="project" value="UniProtKB-UniRule"/>
</dbReference>
<dbReference type="GO" id="GO:0006515">
    <property type="term" value="P:protein quality control for misfolded or incompletely synthesized proteins"/>
    <property type="evidence" value="ECO:0007669"/>
    <property type="project" value="TreeGrafter"/>
</dbReference>
<dbReference type="CDD" id="cd07017">
    <property type="entry name" value="S14_ClpP_2"/>
    <property type="match status" value="1"/>
</dbReference>
<dbReference type="FunFam" id="3.90.226.10:FF:000001">
    <property type="entry name" value="ATP-dependent Clp protease proteolytic subunit"/>
    <property type="match status" value="1"/>
</dbReference>
<dbReference type="Gene3D" id="3.90.226.10">
    <property type="entry name" value="2-enoyl-CoA Hydratase, Chain A, domain 1"/>
    <property type="match status" value="1"/>
</dbReference>
<dbReference type="HAMAP" id="MF_00444">
    <property type="entry name" value="ClpP"/>
    <property type="match status" value="1"/>
</dbReference>
<dbReference type="InterPro" id="IPR001907">
    <property type="entry name" value="ClpP"/>
</dbReference>
<dbReference type="InterPro" id="IPR029045">
    <property type="entry name" value="ClpP/crotonase-like_dom_sf"/>
</dbReference>
<dbReference type="InterPro" id="IPR023562">
    <property type="entry name" value="ClpP/TepA"/>
</dbReference>
<dbReference type="InterPro" id="IPR033135">
    <property type="entry name" value="ClpP_His_AS"/>
</dbReference>
<dbReference type="InterPro" id="IPR018215">
    <property type="entry name" value="ClpP_Ser_AS"/>
</dbReference>
<dbReference type="NCBIfam" id="TIGR00493">
    <property type="entry name" value="clpP"/>
    <property type="match status" value="1"/>
</dbReference>
<dbReference type="NCBIfam" id="NF001368">
    <property type="entry name" value="PRK00277.1"/>
    <property type="match status" value="1"/>
</dbReference>
<dbReference type="NCBIfam" id="NF009205">
    <property type="entry name" value="PRK12553.1"/>
    <property type="match status" value="1"/>
</dbReference>
<dbReference type="PANTHER" id="PTHR10381">
    <property type="entry name" value="ATP-DEPENDENT CLP PROTEASE PROTEOLYTIC SUBUNIT"/>
    <property type="match status" value="1"/>
</dbReference>
<dbReference type="PANTHER" id="PTHR10381:SF70">
    <property type="entry name" value="ATP-DEPENDENT CLP PROTEASE PROTEOLYTIC SUBUNIT"/>
    <property type="match status" value="1"/>
</dbReference>
<dbReference type="Pfam" id="PF00574">
    <property type="entry name" value="CLP_protease"/>
    <property type="match status" value="1"/>
</dbReference>
<dbReference type="PRINTS" id="PR00127">
    <property type="entry name" value="CLPPROTEASEP"/>
</dbReference>
<dbReference type="SUPFAM" id="SSF52096">
    <property type="entry name" value="ClpP/crotonase"/>
    <property type="match status" value="1"/>
</dbReference>
<dbReference type="PROSITE" id="PS00382">
    <property type="entry name" value="CLP_PROTEASE_HIS"/>
    <property type="match status" value="1"/>
</dbReference>
<dbReference type="PROSITE" id="PS00381">
    <property type="entry name" value="CLP_PROTEASE_SER"/>
    <property type="match status" value="1"/>
</dbReference>
<comment type="function">
    <text evidence="1">Cleaves peptides in various proteins in a process that requires ATP hydrolysis. Has a chymotrypsin-like activity. Plays a major role in the degradation of misfolded proteins.</text>
</comment>
<comment type="catalytic activity">
    <reaction evidence="1">
        <text>Hydrolysis of proteins to small peptides in the presence of ATP and magnesium. alpha-casein is the usual test substrate. In the absence of ATP, only oligopeptides shorter than five residues are hydrolyzed (such as succinyl-Leu-Tyr-|-NHMec, and Leu-Tyr-Leu-|-Tyr-Trp, in which cleavage of the -Tyr-|-Leu- and -Tyr-|-Trp bonds also occurs).</text>
        <dbReference type="EC" id="3.4.21.92"/>
    </reaction>
</comment>
<comment type="subunit">
    <text evidence="1">Fourteen ClpP subunits assemble into 2 heptameric rings which stack back to back to give a disk-like structure with a central cavity, resembling the structure of eukaryotic proteasomes.</text>
</comment>
<comment type="subcellular location">
    <subcellularLocation>
        <location evidence="1">Cytoplasm</location>
    </subcellularLocation>
</comment>
<comment type="similarity">
    <text evidence="1">Belongs to the peptidase S14 family.</text>
</comment>
<organism>
    <name type="scientific">Thermus thermophilus (strain ATCC 27634 / DSM 579 / HB8)</name>
    <dbReference type="NCBI Taxonomy" id="300852"/>
    <lineage>
        <taxon>Bacteria</taxon>
        <taxon>Thermotogati</taxon>
        <taxon>Deinococcota</taxon>
        <taxon>Deinococci</taxon>
        <taxon>Thermales</taxon>
        <taxon>Thermaceae</taxon>
        <taxon>Thermus</taxon>
    </lineage>
</organism>
<gene>
    <name evidence="1" type="primary">clpP</name>
    <name type="ordered locus">TTHA0615</name>
</gene>
<keyword id="KW-0002">3D-structure</keyword>
<keyword id="KW-0963">Cytoplasm</keyword>
<keyword id="KW-0378">Hydrolase</keyword>
<keyword id="KW-0645">Protease</keyword>
<keyword id="KW-1185">Reference proteome</keyword>
<keyword id="KW-0720">Serine protease</keyword>
<accession>Q5SKM8</accession>
<proteinExistence type="evidence at protein level"/>
<feature type="chain" id="PRO_0000179700" description="ATP-dependent Clp protease proteolytic subunit">
    <location>
        <begin position="1"/>
        <end position="194"/>
    </location>
</feature>
<feature type="active site" description="Nucleophile" evidence="1">
    <location>
        <position position="97"/>
    </location>
</feature>
<feature type="active site" evidence="1">
    <location>
        <position position="122"/>
    </location>
</feature>
<feature type="helix" evidence="2">
    <location>
        <begin position="19"/>
        <end position="24"/>
    </location>
</feature>
<feature type="turn" evidence="2">
    <location>
        <begin position="25"/>
        <end position="27"/>
    </location>
</feature>
<feature type="strand" evidence="2">
    <location>
        <begin position="28"/>
        <end position="31"/>
    </location>
</feature>
<feature type="helix" evidence="2">
    <location>
        <begin position="37"/>
        <end position="53"/>
    </location>
</feature>
<feature type="strand" evidence="2">
    <location>
        <begin position="59"/>
        <end position="65"/>
    </location>
</feature>
<feature type="helix" evidence="2">
    <location>
        <begin position="70"/>
        <end position="82"/>
    </location>
</feature>
<feature type="strand" evidence="2">
    <location>
        <begin position="83"/>
        <end position="85"/>
    </location>
</feature>
<feature type="strand" evidence="2">
    <location>
        <begin position="87"/>
        <end position="96"/>
    </location>
</feature>
<feature type="helix" evidence="2">
    <location>
        <begin position="98"/>
        <end position="104"/>
    </location>
</feature>
<feature type="strand" evidence="2">
    <location>
        <begin position="111"/>
        <end position="113"/>
    </location>
</feature>
<feature type="strand" evidence="2">
    <location>
        <begin position="118"/>
        <end position="121"/>
    </location>
</feature>
<feature type="helix" evidence="2">
    <location>
        <begin position="132"/>
        <end position="157"/>
    </location>
</feature>
<feature type="helix" evidence="2">
    <location>
        <begin position="161"/>
        <end position="167"/>
    </location>
</feature>
<feature type="strand" evidence="2">
    <location>
        <begin position="172"/>
        <end position="175"/>
    </location>
</feature>
<feature type="helix" evidence="2">
    <location>
        <begin position="176"/>
        <end position="182"/>
    </location>
</feature>
<feature type="strand" evidence="2">
    <location>
        <begin position="186"/>
        <end position="188"/>
    </location>
</feature>
<feature type="helix" evidence="2">
    <location>
        <begin position="192"/>
        <end position="194"/>
    </location>
</feature>